<proteinExistence type="evidence at protein level"/>
<feature type="chain" id="PRO_0000289102" description="Testis-specific Y-encoded-like protein 2">
    <location>
        <begin position="1"/>
        <end position="677"/>
    </location>
</feature>
<feature type="region of interest" description="Disordered" evidence="3">
    <location>
        <begin position="1"/>
        <end position="54"/>
    </location>
</feature>
<feature type="region of interest" description="Disordered" evidence="3">
    <location>
        <begin position="175"/>
        <end position="202"/>
    </location>
</feature>
<feature type="region of interest" description="Disordered" evidence="3">
    <location>
        <begin position="469"/>
        <end position="658"/>
    </location>
</feature>
<feature type="compositionally biased region" description="Pro residues" evidence="3">
    <location>
        <begin position="25"/>
        <end position="44"/>
    </location>
</feature>
<feature type="compositionally biased region" description="Basic residues" evidence="3">
    <location>
        <begin position="178"/>
        <end position="193"/>
    </location>
</feature>
<feature type="compositionally biased region" description="Polar residues" evidence="3">
    <location>
        <begin position="484"/>
        <end position="493"/>
    </location>
</feature>
<feature type="compositionally biased region" description="Basic and acidic residues" evidence="3">
    <location>
        <begin position="509"/>
        <end position="525"/>
    </location>
</feature>
<feature type="compositionally biased region" description="Polar residues" evidence="3">
    <location>
        <begin position="526"/>
        <end position="540"/>
    </location>
</feature>
<feature type="compositionally biased region" description="Acidic residues" evidence="3">
    <location>
        <begin position="543"/>
        <end position="581"/>
    </location>
</feature>
<feature type="compositionally biased region" description="Acidic residues" evidence="3">
    <location>
        <begin position="606"/>
        <end position="627"/>
    </location>
</feature>
<feature type="compositionally biased region" description="Basic and acidic residues" evidence="3">
    <location>
        <begin position="639"/>
        <end position="650"/>
    </location>
</feature>
<feature type="modified residue" description="Phosphoserine" evidence="2">
    <location>
        <position position="18"/>
    </location>
</feature>
<feature type="modified residue" description="Phosphothreonine" evidence="2">
    <location>
        <position position="333"/>
    </location>
</feature>
<feature type="modified residue" description="Phosphoserine" evidence="10">
    <location>
        <position position="648"/>
    </location>
</feature>
<feature type="modified residue" description="Phosphoserine" evidence="10">
    <location>
        <position position="652"/>
    </location>
</feature>
<feature type="modified residue" description="Phosphoserine" evidence="10">
    <location>
        <position position="655"/>
    </location>
</feature>
<feature type="cross-link" description="Glycyl lysine isopeptide (Lys-Gly) (interchain with G-Cter in SUMO2)" evidence="2">
    <location>
        <position position="11"/>
    </location>
</feature>
<feature type="cross-link" description="Glycyl lysine isopeptide (Lys-Gly) (interchain with G-Cter in SUMO2)" evidence="2">
    <location>
        <position position="158"/>
    </location>
</feature>
<feature type="cross-link" description="Glycyl lysine isopeptide (Lys-Gly) (interchain with G-Cter in SUMO2)" evidence="2">
    <location>
        <position position="160"/>
    </location>
</feature>
<feature type="sequence conflict" description="In Ref. 5; BAB31351." evidence="9" ref="5">
    <original>T</original>
    <variation>G</variation>
    <location>
        <position position="12"/>
    </location>
</feature>
<feature type="sequence conflict" description="In Ref. 5; BAB31351." evidence="9" ref="5">
    <original>P</original>
    <variation>A</variation>
    <location>
        <position position="30"/>
    </location>
</feature>
<feature type="sequence conflict" description="In Ref. 5; BAB31351." evidence="9" ref="5">
    <original>G</original>
    <variation>R</variation>
    <location>
        <position position="101"/>
    </location>
</feature>
<feature type="sequence conflict" description="In Ref. 2; AAQ17208." evidence="9" ref="2">
    <original>S</original>
    <variation>N</variation>
    <location>
        <position position="430"/>
    </location>
</feature>
<feature type="sequence conflict" description="In Ref. 2; AAQ17208." evidence="9" ref="2">
    <original>S</original>
    <variation>N</variation>
    <location>
        <position position="482"/>
    </location>
</feature>
<feature type="sequence conflict" description="In Ref. 2; AAQ17208." evidence="9" ref="2">
    <original>T</original>
    <variation>I</variation>
    <location>
        <position position="490"/>
    </location>
</feature>
<feature type="sequence conflict" description="In Ref. 2; AAQ17208." evidence="9" ref="2">
    <original>R</original>
    <variation>G</variation>
    <location>
        <position position="531"/>
    </location>
</feature>
<name>TSYL2_MOUSE</name>
<protein>
    <recommendedName>
        <fullName>Testis-specific Y-encoded-like protein 2</fullName>
        <shortName>TSPY-like protein 2</shortName>
    </recommendedName>
    <alternativeName>
        <fullName>CASK-interacting nucleosome assembly protein</fullName>
    </alternativeName>
    <alternativeName>
        <fullName>Differentially-expressed nucleolar TGF-beta1 target protein</fullName>
    </alternativeName>
</protein>
<sequence length="677" mass="77671">MDRPDEGPPAKTPRLSSSEPRQRDLPPPPPPPLQRLPLPPPQQRPRPQEETEAAQVLADMRGVGPTLPPPLPYVILEEGGIRAYFTLSAESPGWDHAMESGFGEAPSTGIMETLPSSEISGGSLAIDFQVAEPSSLGEKALETCSLGGWGPQMLVGPKRKEEAIIIVEDEDEDDKESVRRRQRRRRRRRKQRKAKESRERSAQRMESILQALESIQMDLEAVNIKAGKAFLRLKRKFIQMRRPFLERRDLIIQHIPGFWVKAFLNHPRISILINQRDRDIFRYLTNLQVQDLRHISMGYKMKLYFQTNPYFTNMVIVKEFQRNRSGRLVSHSTPIRWHRGQEPQAYNRRSHDTRESFFNWFSNHSLPEADRIAEIIKNDLWVNPVRYYMRRGGYRSSRKKQHGKERAKNQYEMVIMEDAHDHYAIEDILSDISEIDEITDNETIHDIKISDFMETTDYFETTDNEVTDANENLCDSENPDHSEGYNTKITDNKGSVAANPDDNSDDPEEKNTYDSEDSNSEKADGDNTTLRDNQQVTNIQDSSDSDNGDEGSDDEDDDGNEGDNEGSDDDDDDNEGSDDDDRDIRYYKNGPEVFDKALDNRTNQNDYEEEVELISEDSVEEEEETSEEASQLSEDSYEDERIYGEERSEVNSEDSDIQEVLPVPKAWASLGKKGKIG</sequence>
<evidence type="ECO:0000250" key="1"/>
<evidence type="ECO:0000250" key="2">
    <source>
        <dbReference type="UniProtKB" id="Q9H2G4"/>
    </source>
</evidence>
<evidence type="ECO:0000256" key="3">
    <source>
        <dbReference type="SAM" id="MobiDB-lite"/>
    </source>
</evidence>
<evidence type="ECO:0000269" key="4">
    <source>
    </source>
</evidence>
<evidence type="ECO:0000269" key="5">
    <source>
    </source>
</evidence>
<evidence type="ECO:0000269" key="6">
    <source>
    </source>
</evidence>
<evidence type="ECO:0000269" key="7">
    <source>
    </source>
</evidence>
<evidence type="ECO:0000269" key="8">
    <source>
    </source>
</evidence>
<evidence type="ECO:0000305" key="9"/>
<evidence type="ECO:0007744" key="10">
    <source>
    </source>
</evidence>
<organism>
    <name type="scientific">Mus musculus</name>
    <name type="common">Mouse</name>
    <dbReference type="NCBI Taxonomy" id="10090"/>
    <lineage>
        <taxon>Eukaryota</taxon>
        <taxon>Metazoa</taxon>
        <taxon>Chordata</taxon>
        <taxon>Craniata</taxon>
        <taxon>Vertebrata</taxon>
        <taxon>Euteleostomi</taxon>
        <taxon>Mammalia</taxon>
        <taxon>Eutheria</taxon>
        <taxon>Euarchontoglires</taxon>
        <taxon>Glires</taxon>
        <taxon>Rodentia</taxon>
        <taxon>Myomorpha</taxon>
        <taxon>Muroidea</taxon>
        <taxon>Muridae</taxon>
        <taxon>Murinae</taxon>
        <taxon>Mus</taxon>
        <taxon>Mus</taxon>
    </lineage>
</organism>
<keyword id="KW-0131">Cell cycle</keyword>
<keyword id="KW-0156">Chromatin regulator</keyword>
<keyword id="KW-0963">Cytoplasm</keyword>
<keyword id="KW-1017">Isopeptide bond</keyword>
<keyword id="KW-0539">Nucleus</keyword>
<keyword id="KW-0597">Phosphoprotein</keyword>
<keyword id="KW-1185">Reference proteome</keyword>
<keyword id="KW-0804">Transcription</keyword>
<keyword id="KW-0805">Transcription regulation</keyword>
<keyword id="KW-0832">Ubl conjugation</keyword>
<dbReference type="EMBL" id="BK000279">
    <property type="protein sequence ID" value="DAA00247.1"/>
    <property type="molecule type" value="mRNA"/>
</dbReference>
<dbReference type="EMBL" id="AY273809">
    <property type="protein sequence ID" value="AAQ17208.1"/>
    <property type="molecule type" value="mRNA"/>
</dbReference>
<dbReference type="EMBL" id="AL731727">
    <property type="status" value="NOT_ANNOTATED_CDS"/>
    <property type="molecule type" value="Genomic_DNA"/>
</dbReference>
<dbReference type="EMBL" id="BC054393">
    <property type="protein sequence ID" value="AAH54393.1"/>
    <property type="molecule type" value="mRNA"/>
</dbReference>
<dbReference type="EMBL" id="AK018700">
    <property type="protein sequence ID" value="BAB31351.1"/>
    <property type="molecule type" value="mRNA"/>
</dbReference>
<dbReference type="CCDS" id="CCDS30474.1"/>
<dbReference type="RefSeq" id="NP_084112.1">
    <property type="nucleotide sequence ID" value="NM_029836.4"/>
</dbReference>
<dbReference type="SMR" id="Q7TQI8"/>
<dbReference type="BioGRID" id="206838">
    <property type="interactions" value="1"/>
</dbReference>
<dbReference type="FunCoup" id="Q7TQI8">
    <property type="interactions" value="759"/>
</dbReference>
<dbReference type="STRING" id="10090.ENSMUSP00000046782"/>
<dbReference type="GlyGen" id="Q7TQI8">
    <property type="glycosylation" value="1 site"/>
</dbReference>
<dbReference type="iPTMnet" id="Q7TQI8"/>
<dbReference type="PhosphoSitePlus" id="Q7TQI8"/>
<dbReference type="PaxDb" id="10090-ENSMUSP00000046782"/>
<dbReference type="ProteomicsDB" id="298003"/>
<dbReference type="Antibodypedia" id="12456">
    <property type="antibodies" value="258 antibodies from 36 providers"/>
</dbReference>
<dbReference type="DNASU" id="52808"/>
<dbReference type="Ensembl" id="ENSMUST00000044509.7">
    <property type="protein sequence ID" value="ENSMUSP00000046782.7"/>
    <property type="gene ID" value="ENSMUSG00000041096.14"/>
</dbReference>
<dbReference type="GeneID" id="52808"/>
<dbReference type="KEGG" id="mmu:52808"/>
<dbReference type="UCSC" id="uc009uqf.1">
    <property type="organism name" value="mouse"/>
</dbReference>
<dbReference type="AGR" id="MGI:106244"/>
<dbReference type="CTD" id="64061"/>
<dbReference type="MGI" id="MGI:106244">
    <property type="gene designation" value="Tspyl2"/>
</dbReference>
<dbReference type="VEuPathDB" id="HostDB:ENSMUSG00000041096"/>
<dbReference type="eggNOG" id="KOG1508">
    <property type="taxonomic scope" value="Eukaryota"/>
</dbReference>
<dbReference type="GeneTree" id="ENSGT00940000162496"/>
<dbReference type="HOGENOM" id="CLU_025445_0_0_1"/>
<dbReference type="InParanoid" id="Q7TQI8"/>
<dbReference type="OMA" id="QDTSHSF"/>
<dbReference type="OrthoDB" id="19419at2759"/>
<dbReference type="PhylomeDB" id="Q7TQI8"/>
<dbReference type="TreeFam" id="TF313386"/>
<dbReference type="BioGRID-ORCS" id="52808">
    <property type="hits" value="1 hit in 78 CRISPR screens"/>
</dbReference>
<dbReference type="PRO" id="PR:Q7TQI8"/>
<dbReference type="Proteomes" id="UP000000589">
    <property type="component" value="Chromosome X"/>
</dbReference>
<dbReference type="RNAct" id="Q7TQI8">
    <property type="molecule type" value="protein"/>
</dbReference>
<dbReference type="Bgee" id="ENSMUSG00000041096">
    <property type="expression patterns" value="Expressed in retinal neural layer and 227 other cell types or tissues"/>
</dbReference>
<dbReference type="ExpressionAtlas" id="Q7TQI8">
    <property type="expression patterns" value="baseline and differential"/>
</dbReference>
<dbReference type="GO" id="GO:0005737">
    <property type="term" value="C:cytoplasm"/>
    <property type="evidence" value="ECO:0007669"/>
    <property type="project" value="UniProtKB-SubCell"/>
</dbReference>
<dbReference type="GO" id="GO:0005730">
    <property type="term" value="C:nucleolus"/>
    <property type="evidence" value="ECO:0007669"/>
    <property type="project" value="Ensembl"/>
</dbReference>
<dbReference type="GO" id="GO:0030308">
    <property type="term" value="P:negative regulation of cell growth"/>
    <property type="evidence" value="ECO:0007669"/>
    <property type="project" value="Ensembl"/>
</dbReference>
<dbReference type="GO" id="GO:0008156">
    <property type="term" value="P:negative regulation of DNA replication"/>
    <property type="evidence" value="ECO:0007669"/>
    <property type="project" value="Ensembl"/>
</dbReference>
<dbReference type="GO" id="GO:0006334">
    <property type="term" value="P:nucleosome assembly"/>
    <property type="evidence" value="ECO:0007669"/>
    <property type="project" value="InterPro"/>
</dbReference>
<dbReference type="FunFam" id="1.20.5.1500:FF:000006">
    <property type="entry name" value="Testis-specific Y-encoded-like protein 2"/>
    <property type="match status" value="1"/>
</dbReference>
<dbReference type="FunFam" id="3.30.1120.90:FF:000002">
    <property type="entry name" value="Testis-specific Y-encoded-like protein 2"/>
    <property type="match status" value="1"/>
</dbReference>
<dbReference type="Gene3D" id="1.20.5.1500">
    <property type="match status" value="1"/>
</dbReference>
<dbReference type="Gene3D" id="3.30.1120.90">
    <property type="entry name" value="Nucleosome assembly protein"/>
    <property type="match status" value="1"/>
</dbReference>
<dbReference type="InterPro" id="IPR037231">
    <property type="entry name" value="NAP-like_sf"/>
</dbReference>
<dbReference type="InterPro" id="IPR002164">
    <property type="entry name" value="NAP_family"/>
</dbReference>
<dbReference type="PANTHER" id="PTHR11875">
    <property type="entry name" value="TESTIS-SPECIFIC Y-ENCODED PROTEIN"/>
    <property type="match status" value="1"/>
</dbReference>
<dbReference type="Pfam" id="PF00956">
    <property type="entry name" value="NAP"/>
    <property type="match status" value="1"/>
</dbReference>
<dbReference type="SUPFAM" id="SSF143113">
    <property type="entry name" value="NAP-like"/>
    <property type="match status" value="1"/>
</dbReference>
<gene>
    <name type="primary">Tspyl2</name>
    <name type="synonym">Cinap</name>
    <name type="synonym">Dentt</name>
    <name type="synonym">DXBwg1396e</name>
    <name type="synonym">Tspx</name>
</gene>
<reference key="1">
    <citation type="journal article" date="2003" name="Dev. Dyn.">
        <title>Differentially expressed nucleolar TGF-beta1 target (DENTT) in mouse development.</title>
        <authorList>
            <person name="Ozbun L.L."/>
            <person name="Martinez A."/>
            <person name="Angdisen J."/>
            <person name="Umphress S."/>
            <person name="Kang Y."/>
            <person name="Wang M."/>
            <person name="You M."/>
            <person name="Jakowlew S.B."/>
        </authorList>
    </citation>
    <scope>NUCLEOTIDE SEQUENCE [MRNA]</scope>
    <scope>SUBCELLULAR LOCATION</scope>
    <scope>DEVELOPMENTAL STAGE</scope>
</reference>
<reference key="2">
    <citation type="journal article" date="2004" name="Neuron">
        <title>Transcriptional modification by a CASK-interacting nucleosome assembly protein.</title>
        <authorList>
            <person name="Wang G.-S."/>
            <person name="Hong C.-J."/>
            <person name="Yen T.-Y."/>
            <person name="Huang H.-Y."/>
            <person name="Ou Y."/>
            <person name="Huang T.-N."/>
            <person name="Jung W.-G."/>
            <person name="Kuo T.-Y."/>
            <person name="Sheng M."/>
            <person name="Wang T.-F."/>
            <person name="Hsueh Y.-P."/>
        </authorList>
    </citation>
    <scope>NUCLEOTIDE SEQUENCE [MRNA]</scope>
    <scope>FUNCTION</scope>
    <scope>SUBCELLULAR LOCATION</scope>
    <scope>INTERACTION WITH CASK AND HISTONES</scope>
    <scope>IDENTIFICATION IN COMPLEX WITH CASK AND TBR1</scope>
    <source>
        <strain>C57BL/6J</strain>
    </source>
</reference>
<reference key="3">
    <citation type="journal article" date="2009" name="PLoS Biol.">
        <title>Lineage-specific biology revealed by a finished genome assembly of the mouse.</title>
        <authorList>
            <person name="Church D.M."/>
            <person name="Goodstadt L."/>
            <person name="Hillier L.W."/>
            <person name="Zody M.C."/>
            <person name="Goldstein S."/>
            <person name="She X."/>
            <person name="Bult C.J."/>
            <person name="Agarwala R."/>
            <person name="Cherry J.L."/>
            <person name="DiCuccio M."/>
            <person name="Hlavina W."/>
            <person name="Kapustin Y."/>
            <person name="Meric P."/>
            <person name="Maglott D."/>
            <person name="Birtle Z."/>
            <person name="Marques A.C."/>
            <person name="Graves T."/>
            <person name="Zhou S."/>
            <person name="Teague B."/>
            <person name="Potamousis K."/>
            <person name="Churas C."/>
            <person name="Place M."/>
            <person name="Herschleb J."/>
            <person name="Runnheim R."/>
            <person name="Forrest D."/>
            <person name="Amos-Landgraf J."/>
            <person name="Schwartz D.C."/>
            <person name="Cheng Z."/>
            <person name="Lindblad-Toh K."/>
            <person name="Eichler E.E."/>
            <person name="Ponting C.P."/>
        </authorList>
    </citation>
    <scope>NUCLEOTIDE SEQUENCE [LARGE SCALE GENOMIC DNA]</scope>
    <source>
        <strain>C57BL/6J</strain>
    </source>
</reference>
<reference key="4">
    <citation type="journal article" date="2004" name="Genome Res.">
        <title>The status, quality, and expansion of the NIH full-length cDNA project: the Mammalian Gene Collection (MGC).</title>
        <authorList>
            <consortium name="The MGC Project Team"/>
        </authorList>
    </citation>
    <scope>NUCLEOTIDE SEQUENCE [LARGE SCALE MRNA]</scope>
    <source>
        <tissue>Eye</tissue>
    </source>
</reference>
<reference key="5">
    <citation type="journal article" date="2005" name="Science">
        <title>The transcriptional landscape of the mammalian genome.</title>
        <authorList>
            <person name="Carninci P."/>
            <person name="Kasukawa T."/>
            <person name="Katayama S."/>
            <person name="Gough J."/>
            <person name="Frith M.C."/>
            <person name="Maeda N."/>
            <person name="Oyama R."/>
            <person name="Ravasi T."/>
            <person name="Lenhard B."/>
            <person name="Wells C."/>
            <person name="Kodzius R."/>
            <person name="Shimokawa K."/>
            <person name="Bajic V.B."/>
            <person name="Brenner S.E."/>
            <person name="Batalov S."/>
            <person name="Forrest A.R."/>
            <person name="Zavolan M."/>
            <person name="Davis M.J."/>
            <person name="Wilming L.G."/>
            <person name="Aidinis V."/>
            <person name="Allen J.E."/>
            <person name="Ambesi-Impiombato A."/>
            <person name="Apweiler R."/>
            <person name="Aturaliya R.N."/>
            <person name="Bailey T.L."/>
            <person name="Bansal M."/>
            <person name="Baxter L."/>
            <person name="Beisel K.W."/>
            <person name="Bersano T."/>
            <person name="Bono H."/>
            <person name="Chalk A.M."/>
            <person name="Chiu K.P."/>
            <person name="Choudhary V."/>
            <person name="Christoffels A."/>
            <person name="Clutterbuck D.R."/>
            <person name="Crowe M.L."/>
            <person name="Dalla E."/>
            <person name="Dalrymple B.P."/>
            <person name="de Bono B."/>
            <person name="Della Gatta G."/>
            <person name="di Bernardo D."/>
            <person name="Down T."/>
            <person name="Engstrom P."/>
            <person name="Fagiolini M."/>
            <person name="Faulkner G."/>
            <person name="Fletcher C.F."/>
            <person name="Fukushima T."/>
            <person name="Furuno M."/>
            <person name="Futaki S."/>
            <person name="Gariboldi M."/>
            <person name="Georgii-Hemming P."/>
            <person name="Gingeras T.R."/>
            <person name="Gojobori T."/>
            <person name="Green R.E."/>
            <person name="Gustincich S."/>
            <person name="Harbers M."/>
            <person name="Hayashi Y."/>
            <person name="Hensch T.K."/>
            <person name="Hirokawa N."/>
            <person name="Hill D."/>
            <person name="Huminiecki L."/>
            <person name="Iacono M."/>
            <person name="Ikeo K."/>
            <person name="Iwama A."/>
            <person name="Ishikawa T."/>
            <person name="Jakt M."/>
            <person name="Kanapin A."/>
            <person name="Katoh M."/>
            <person name="Kawasawa Y."/>
            <person name="Kelso J."/>
            <person name="Kitamura H."/>
            <person name="Kitano H."/>
            <person name="Kollias G."/>
            <person name="Krishnan S.P."/>
            <person name="Kruger A."/>
            <person name="Kummerfeld S.K."/>
            <person name="Kurochkin I.V."/>
            <person name="Lareau L.F."/>
            <person name="Lazarevic D."/>
            <person name="Lipovich L."/>
            <person name="Liu J."/>
            <person name="Liuni S."/>
            <person name="McWilliam S."/>
            <person name="Madan Babu M."/>
            <person name="Madera M."/>
            <person name="Marchionni L."/>
            <person name="Matsuda H."/>
            <person name="Matsuzawa S."/>
            <person name="Miki H."/>
            <person name="Mignone F."/>
            <person name="Miyake S."/>
            <person name="Morris K."/>
            <person name="Mottagui-Tabar S."/>
            <person name="Mulder N."/>
            <person name="Nakano N."/>
            <person name="Nakauchi H."/>
            <person name="Ng P."/>
            <person name="Nilsson R."/>
            <person name="Nishiguchi S."/>
            <person name="Nishikawa S."/>
            <person name="Nori F."/>
            <person name="Ohara O."/>
            <person name="Okazaki Y."/>
            <person name="Orlando V."/>
            <person name="Pang K.C."/>
            <person name="Pavan W.J."/>
            <person name="Pavesi G."/>
            <person name="Pesole G."/>
            <person name="Petrovsky N."/>
            <person name="Piazza S."/>
            <person name="Reed J."/>
            <person name="Reid J.F."/>
            <person name="Ring B.Z."/>
            <person name="Ringwald M."/>
            <person name="Rost B."/>
            <person name="Ruan Y."/>
            <person name="Salzberg S.L."/>
            <person name="Sandelin A."/>
            <person name="Schneider C."/>
            <person name="Schoenbach C."/>
            <person name="Sekiguchi K."/>
            <person name="Semple C.A."/>
            <person name="Seno S."/>
            <person name="Sessa L."/>
            <person name="Sheng Y."/>
            <person name="Shibata Y."/>
            <person name="Shimada H."/>
            <person name="Shimada K."/>
            <person name="Silva D."/>
            <person name="Sinclair B."/>
            <person name="Sperling S."/>
            <person name="Stupka E."/>
            <person name="Sugiura K."/>
            <person name="Sultana R."/>
            <person name="Takenaka Y."/>
            <person name="Taki K."/>
            <person name="Tammoja K."/>
            <person name="Tan S.L."/>
            <person name="Tang S."/>
            <person name="Taylor M.S."/>
            <person name="Tegner J."/>
            <person name="Teichmann S.A."/>
            <person name="Ueda H.R."/>
            <person name="van Nimwegen E."/>
            <person name="Verardo R."/>
            <person name="Wei C.L."/>
            <person name="Yagi K."/>
            <person name="Yamanishi H."/>
            <person name="Zabarovsky E."/>
            <person name="Zhu S."/>
            <person name="Zimmer A."/>
            <person name="Hide W."/>
            <person name="Bult C."/>
            <person name="Grimmond S.M."/>
            <person name="Teasdale R.D."/>
            <person name="Liu E.T."/>
            <person name="Brusic V."/>
            <person name="Quackenbush J."/>
            <person name="Wahlestedt C."/>
            <person name="Mattick J.S."/>
            <person name="Hume D.A."/>
            <person name="Kai C."/>
            <person name="Sasaki D."/>
            <person name="Tomaru Y."/>
            <person name="Fukuda S."/>
            <person name="Kanamori-Katayama M."/>
            <person name="Suzuki M."/>
            <person name="Aoki J."/>
            <person name="Arakawa T."/>
            <person name="Iida J."/>
            <person name="Imamura K."/>
            <person name="Itoh M."/>
            <person name="Kato T."/>
            <person name="Kawaji H."/>
            <person name="Kawagashira N."/>
            <person name="Kawashima T."/>
            <person name="Kojima M."/>
            <person name="Kondo S."/>
            <person name="Konno H."/>
            <person name="Nakano K."/>
            <person name="Ninomiya N."/>
            <person name="Nishio T."/>
            <person name="Okada M."/>
            <person name="Plessy C."/>
            <person name="Shibata K."/>
            <person name="Shiraki T."/>
            <person name="Suzuki S."/>
            <person name="Tagami M."/>
            <person name="Waki K."/>
            <person name="Watahiki A."/>
            <person name="Okamura-Oho Y."/>
            <person name="Suzuki H."/>
            <person name="Kawai J."/>
            <person name="Hayashizaki Y."/>
        </authorList>
    </citation>
    <scope>NUCLEOTIDE SEQUENCE [LARGE SCALE MRNA] OF 1-400</scope>
    <source>
        <strain>C57BL/6J</strain>
        <tissue>Fetal eye</tissue>
    </source>
</reference>
<reference key="6">
    <citation type="journal article" date="2002" name="Dev. Dyn.">
        <title>Expression of differentially expressed nucleolar transforming growth factor-beta1 target (DENTT) in adult mouse tissues.</title>
        <authorList>
            <person name="Martinez A."/>
            <person name="Ozbun L.L."/>
            <person name="Angdisen J."/>
            <person name="Jakowlew S.B."/>
        </authorList>
    </citation>
    <scope>TISSUE SPECIFICITY</scope>
    <scope>SUBCELLULAR LOCATION</scope>
    <scope>INDUCTION</scope>
</reference>
<reference key="7">
    <citation type="journal article" date="2004" name="Chromosome Res.">
        <title>TSPY, the candidate gonadoblastoma gene on the human Y chromosome, has a widely expressed homologue on the X -- implications for Y chromosome evolution.</title>
        <authorList>
            <person name="Delbridge M.L."/>
            <person name="Longepied G."/>
            <person name="Depetris D."/>
            <person name="Mattei M.-G."/>
            <person name="Disteche C.M."/>
            <person name="Marshall Graves J.A."/>
            <person name="Mitchell M.J."/>
        </authorList>
    </citation>
    <scope>IDENTIFICATION</scope>
    <scope>TISSUE SPECIFICITY</scope>
</reference>
<reference key="8">
    <citation type="journal article" date="2006" name="J. Comp. Neurol.">
        <title>Neural activity- and development-dependent expression and distribution of CASK interacting nucleosome assembly protein in mouse brain.</title>
        <authorList>
            <person name="Lin C.-W."/>
            <person name="Huang T.-N."/>
            <person name="Wang G.-S."/>
            <person name="Kuo T.-Y."/>
            <person name="Yen T.-Y."/>
            <person name="Hsueh Y.-P."/>
        </authorList>
    </citation>
    <scope>TISSUE SPECIFICITY</scope>
    <scope>DEVELOPMENTAL STAGE</scope>
    <scope>SUBCELLULAR LOCATION</scope>
</reference>
<reference key="9">
    <citation type="journal article" date="2010" name="Cell">
        <title>A tissue-specific atlas of mouse protein phosphorylation and expression.</title>
        <authorList>
            <person name="Huttlin E.L."/>
            <person name="Jedrychowski M.P."/>
            <person name="Elias J.E."/>
            <person name="Goswami T."/>
            <person name="Rad R."/>
            <person name="Beausoleil S.A."/>
            <person name="Villen J."/>
            <person name="Haas W."/>
            <person name="Sowa M.E."/>
            <person name="Gygi S.P."/>
        </authorList>
    </citation>
    <scope>PHOSPHORYLATION [LARGE SCALE ANALYSIS] AT SER-648; SER-652 AND SER-655</scope>
    <scope>IDENTIFICATION BY MASS SPECTROMETRY [LARGE SCALE ANALYSIS]</scope>
    <source>
        <tissue>Brain</tissue>
        <tissue>Kidney</tissue>
        <tissue>Spleen</tissue>
        <tissue>Testis</tissue>
    </source>
</reference>
<comment type="function">
    <text evidence="6">Part of the CASK/TBR1/TSPYL2 transcriptional complex which modulates gene expression in response to neuronal synaptic activity, probably by facilitating nucleosome assembly. May inhibit cell proliferation by inducing p53-dependent CDKN1A expression.</text>
</comment>
<comment type="subunit">
    <text evidence="6">Interacts with histones. Interacts with CASK. Part of a complex containing CASK, TBR1 and TSPYL2.</text>
</comment>
<comment type="subcellular location">
    <subcellularLocation>
        <location>Nucleus</location>
    </subcellularLocation>
    <subcellularLocation>
        <location>Cytoplasm</location>
    </subcellularLocation>
    <text>Enriched in transcriptionally active regions of chromatin in neurons.</text>
</comment>
<comment type="tissue specificity">
    <text evidence="4 7 8">Present at high levels in the pituitary gland and at moderate levels in adrenal gland, brain, testis and ovary. In brain, expressed both in mature neurons and progenitor cells (at protein level).</text>
</comment>
<comment type="developmental stage">
    <text evidence="5 8">Present widely throughout embryogenesis. Present in developing brain from 10.5 dpc to P7 (at protein level).</text>
</comment>
<comment type="induction">
    <text evidence="4">By TGFB1 or serum in pituitary cell lines (at protein level).</text>
</comment>
<comment type="PTM">
    <text evidence="1">Phosphorylation at Thr-333 impairs function on cell proliferation.</text>
</comment>
<comment type="miscellaneous">
    <text>Synaptic activity down-regulates TSPYL2 protein levels by inducing rapid proteasomal degradation.</text>
</comment>
<comment type="miscellaneous">
    <text>Subject to X inactivation.</text>
</comment>
<comment type="similarity">
    <text evidence="9">Belongs to the nucleosome assembly protein (NAP) family.</text>
</comment>
<accession>Q7TQI8</accession>
<accession>Q6WRI3</accession>
<accession>Q9CU22</accession>